<evidence type="ECO:0000255" key="1">
    <source>
        <dbReference type="HAMAP-Rule" id="MF_01310"/>
    </source>
</evidence>
<evidence type="ECO:0000305" key="2"/>
<feature type="chain" id="PRO_1000165533" description="Small ribosomal subunit protein uS11">
    <location>
        <begin position="1"/>
        <end position="133"/>
    </location>
</feature>
<protein>
    <recommendedName>
        <fullName evidence="1">Small ribosomal subunit protein uS11</fullName>
    </recommendedName>
    <alternativeName>
        <fullName evidence="2">30S ribosomal protein S11</fullName>
    </alternativeName>
</protein>
<comment type="function">
    <text evidence="1">Located on the platform of the 30S subunit, it bridges several disparate RNA helices of the 16S rRNA. Forms part of the Shine-Dalgarno cleft in the 70S ribosome.</text>
</comment>
<comment type="subunit">
    <text evidence="1">Part of the 30S ribosomal subunit. Interacts with proteins S7 and S18. Binds to IF-3.</text>
</comment>
<comment type="similarity">
    <text evidence="1">Belongs to the universal ribosomal protein uS11 family.</text>
</comment>
<reference key="1">
    <citation type="submission" date="2005-03" db="EMBL/GenBank/DDBJ databases">
        <title>Brevibacillus brevis strain 47, complete genome.</title>
        <authorList>
            <person name="Hosoyama A."/>
            <person name="Yamada R."/>
            <person name="Hongo Y."/>
            <person name="Terui Y."/>
            <person name="Ankai A."/>
            <person name="Masuyama W."/>
            <person name="Sekiguchi M."/>
            <person name="Takeda T."/>
            <person name="Asano K."/>
            <person name="Ohji S."/>
            <person name="Ichikawa N."/>
            <person name="Narita S."/>
            <person name="Aoki N."/>
            <person name="Miura H."/>
            <person name="Matsushita S."/>
            <person name="Sekigawa T."/>
            <person name="Yamagata H."/>
            <person name="Yoshikawa H."/>
            <person name="Udaka S."/>
            <person name="Tanikawa S."/>
            <person name="Fujita N."/>
        </authorList>
    </citation>
    <scope>NUCLEOTIDE SEQUENCE [LARGE SCALE GENOMIC DNA]</scope>
    <source>
        <strain>47 / JCM 6285 / NBRC 100599</strain>
    </source>
</reference>
<proteinExistence type="inferred from homology"/>
<sequence>MAKRKQATATRTRRRDRKNVEVGVAHIRSTFNNTIVTITDPHGNAISWSSAGSLGFKGSRKSTPFAAQMAAEAAARVAMEHGMRSLEVSVKGPGAGREAAIRSLQATGLEVNMIKDVTPIPHNGCRPPKRRRV</sequence>
<gene>
    <name evidence="1" type="primary">rpsK</name>
    <name type="ordered locus">BBR47_02470</name>
</gene>
<dbReference type="EMBL" id="AP008955">
    <property type="protein sequence ID" value="BAH41224.1"/>
    <property type="molecule type" value="Genomic_DNA"/>
</dbReference>
<dbReference type="RefSeq" id="WP_005828803.1">
    <property type="nucleotide sequence ID" value="NC_012491.1"/>
</dbReference>
<dbReference type="SMR" id="C0ZIK6"/>
<dbReference type="STRING" id="358681.BBR47_02470"/>
<dbReference type="GeneID" id="95752089"/>
<dbReference type="KEGG" id="bbe:BBR47_02470"/>
<dbReference type="eggNOG" id="COG0100">
    <property type="taxonomic scope" value="Bacteria"/>
</dbReference>
<dbReference type="HOGENOM" id="CLU_072439_5_0_9"/>
<dbReference type="Proteomes" id="UP000001877">
    <property type="component" value="Chromosome"/>
</dbReference>
<dbReference type="GO" id="GO:1990904">
    <property type="term" value="C:ribonucleoprotein complex"/>
    <property type="evidence" value="ECO:0007669"/>
    <property type="project" value="UniProtKB-KW"/>
</dbReference>
<dbReference type="GO" id="GO:0005840">
    <property type="term" value="C:ribosome"/>
    <property type="evidence" value="ECO:0007669"/>
    <property type="project" value="UniProtKB-KW"/>
</dbReference>
<dbReference type="GO" id="GO:0019843">
    <property type="term" value="F:rRNA binding"/>
    <property type="evidence" value="ECO:0007669"/>
    <property type="project" value="UniProtKB-UniRule"/>
</dbReference>
<dbReference type="GO" id="GO:0003735">
    <property type="term" value="F:structural constituent of ribosome"/>
    <property type="evidence" value="ECO:0007669"/>
    <property type="project" value="InterPro"/>
</dbReference>
<dbReference type="GO" id="GO:0006412">
    <property type="term" value="P:translation"/>
    <property type="evidence" value="ECO:0007669"/>
    <property type="project" value="UniProtKB-UniRule"/>
</dbReference>
<dbReference type="FunFam" id="3.30.420.80:FF:000001">
    <property type="entry name" value="30S ribosomal protein S11"/>
    <property type="match status" value="1"/>
</dbReference>
<dbReference type="Gene3D" id="3.30.420.80">
    <property type="entry name" value="Ribosomal protein S11"/>
    <property type="match status" value="1"/>
</dbReference>
<dbReference type="HAMAP" id="MF_01310">
    <property type="entry name" value="Ribosomal_uS11"/>
    <property type="match status" value="1"/>
</dbReference>
<dbReference type="InterPro" id="IPR001971">
    <property type="entry name" value="Ribosomal_uS11"/>
</dbReference>
<dbReference type="InterPro" id="IPR019981">
    <property type="entry name" value="Ribosomal_uS11_bac-type"/>
</dbReference>
<dbReference type="InterPro" id="IPR018102">
    <property type="entry name" value="Ribosomal_uS11_CS"/>
</dbReference>
<dbReference type="InterPro" id="IPR036967">
    <property type="entry name" value="Ribosomal_uS11_sf"/>
</dbReference>
<dbReference type="NCBIfam" id="NF003698">
    <property type="entry name" value="PRK05309.1"/>
    <property type="match status" value="1"/>
</dbReference>
<dbReference type="NCBIfam" id="TIGR03632">
    <property type="entry name" value="uS11_bact"/>
    <property type="match status" value="1"/>
</dbReference>
<dbReference type="PANTHER" id="PTHR11759">
    <property type="entry name" value="40S RIBOSOMAL PROTEIN S14/30S RIBOSOMAL PROTEIN S11"/>
    <property type="match status" value="1"/>
</dbReference>
<dbReference type="Pfam" id="PF00411">
    <property type="entry name" value="Ribosomal_S11"/>
    <property type="match status" value="1"/>
</dbReference>
<dbReference type="PIRSF" id="PIRSF002131">
    <property type="entry name" value="Ribosomal_S11"/>
    <property type="match status" value="1"/>
</dbReference>
<dbReference type="SUPFAM" id="SSF53137">
    <property type="entry name" value="Translational machinery components"/>
    <property type="match status" value="1"/>
</dbReference>
<dbReference type="PROSITE" id="PS00054">
    <property type="entry name" value="RIBOSOMAL_S11"/>
    <property type="match status" value="1"/>
</dbReference>
<name>RS11_BREBN</name>
<accession>C0ZIK6</accession>
<keyword id="KW-1185">Reference proteome</keyword>
<keyword id="KW-0687">Ribonucleoprotein</keyword>
<keyword id="KW-0689">Ribosomal protein</keyword>
<keyword id="KW-0694">RNA-binding</keyword>
<keyword id="KW-0699">rRNA-binding</keyword>
<organism>
    <name type="scientific">Brevibacillus brevis (strain 47 / JCM 6285 / NBRC 100599)</name>
    <dbReference type="NCBI Taxonomy" id="358681"/>
    <lineage>
        <taxon>Bacteria</taxon>
        <taxon>Bacillati</taxon>
        <taxon>Bacillota</taxon>
        <taxon>Bacilli</taxon>
        <taxon>Bacillales</taxon>
        <taxon>Paenibacillaceae</taxon>
        <taxon>Brevibacillus</taxon>
    </lineage>
</organism>